<dbReference type="EMBL" id="M21532">
    <property type="protein sequence ID" value="AAA02989.1"/>
    <property type="status" value="ALT_INIT"/>
    <property type="molecule type" value="mRNA"/>
</dbReference>
<dbReference type="EMBL" id="S40022">
    <property type="protein sequence ID" value="AAB19316.1"/>
    <property type="status" value="ALT_SEQ"/>
    <property type="molecule type" value="Genomic_DNA"/>
</dbReference>
<dbReference type="EMBL" id="AK003002">
    <property type="protein sequence ID" value="BAC25015.1"/>
    <property type="status" value="ALT_INIT"/>
    <property type="molecule type" value="mRNA"/>
</dbReference>
<dbReference type="EMBL" id="AK160398">
    <property type="protein sequence ID" value="BAE35767.1"/>
    <property type="status" value="ALT_INIT"/>
    <property type="molecule type" value="mRNA"/>
</dbReference>
<dbReference type="CCDS" id="CCDS52470.1"/>
<dbReference type="PIR" id="A40322">
    <property type="entry name" value="B34955"/>
</dbReference>
<dbReference type="RefSeq" id="NP_001123276.1">
    <property type="nucleotide sequence ID" value="NM_001129804.2"/>
</dbReference>
<dbReference type="RefSeq" id="NP_032816.1">
    <property type="nucleotide sequence ID" value="NM_008790.2"/>
</dbReference>
<dbReference type="RefSeq" id="XP_006508793.2">
    <property type="nucleotide sequence ID" value="XM_006508730.2"/>
</dbReference>
<dbReference type="BioGRID" id="202055">
    <property type="interactions" value="11"/>
</dbReference>
<dbReference type="FunCoup" id="P12660">
    <property type="interactions" value="61"/>
</dbReference>
<dbReference type="STRING" id="10090.ENSMUSP00000121079"/>
<dbReference type="iPTMnet" id="P12660"/>
<dbReference type="PhosphoSitePlus" id="P12660"/>
<dbReference type="PaxDb" id="10090-ENSMUSP00000121079"/>
<dbReference type="ProteomicsDB" id="289329"/>
<dbReference type="Antibodypedia" id="57393">
    <property type="antibodies" value="29 antibodies from 12 providers"/>
</dbReference>
<dbReference type="DNASU" id="18545"/>
<dbReference type="Ensembl" id="ENSMUST00000133459.8">
    <property type="protein sequence ID" value="ENSMUSP00000122902.2"/>
    <property type="gene ID" value="ENSMUSG00000004630.19"/>
</dbReference>
<dbReference type="GeneID" id="18545"/>
<dbReference type="KEGG" id="mmu:18545"/>
<dbReference type="UCSC" id="uc009ksa.2">
    <property type="organism name" value="mouse"/>
</dbReference>
<dbReference type="AGR" id="MGI:97508"/>
<dbReference type="CTD" id="126006"/>
<dbReference type="MGI" id="MGI:97508">
    <property type="gene designation" value="Pcp2"/>
</dbReference>
<dbReference type="VEuPathDB" id="HostDB:ENSMUSG00000004630"/>
<dbReference type="eggNOG" id="KOG1130">
    <property type="taxonomic scope" value="Eukaryota"/>
</dbReference>
<dbReference type="GeneTree" id="ENSGT00940000162025"/>
<dbReference type="HOGENOM" id="CLU_166511_0_0_1"/>
<dbReference type="InParanoid" id="P12660"/>
<dbReference type="OMA" id="LMDMVAH"/>
<dbReference type="OrthoDB" id="286233at2759"/>
<dbReference type="Reactome" id="R-MMU-418594">
    <property type="pathway name" value="G alpha (i) signalling events"/>
</dbReference>
<dbReference type="BioGRID-ORCS" id="18545">
    <property type="hits" value="0 hits in 76 CRISPR screens"/>
</dbReference>
<dbReference type="ChiTaRS" id="Pcp2">
    <property type="organism name" value="mouse"/>
</dbReference>
<dbReference type="PRO" id="PR:P12660"/>
<dbReference type="Proteomes" id="UP000000589">
    <property type="component" value="Chromosome 8"/>
</dbReference>
<dbReference type="RNAct" id="P12660">
    <property type="molecule type" value="protein"/>
</dbReference>
<dbReference type="Bgee" id="ENSMUSG00000004630">
    <property type="expression patterns" value="Expressed in retinal neural layer and 90 other cell types or tissues"/>
</dbReference>
<dbReference type="ExpressionAtlas" id="P12660">
    <property type="expression patterns" value="baseline and differential"/>
</dbReference>
<dbReference type="GO" id="GO:0005085">
    <property type="term" value="F:guanyl-nucleotide exchange factor activity"/>
    <property type="evidence" value="ECO:0000314"/>
    <property type="project" value="MGI"/>
</dbReference>
<dbReference type="GO" id="GO:0016056">
    <property type="term" value="P:G protein-coupled opsin signaling pathway"/>
    <property type="evidence" value="ECO:0000315"/>
    <property type="project" value="MGI"/>
</dbReference>
<dbReference type="FunFam" id="1.25.40.10:FF:000204">
    <property type="entry name" value="Purkinje cell protein 2 homolog"/>
    <property type="match status" value="1"/>
</dbReference>
<dbReference type="Gene3D" id="1.25.40.10">
    <property type="entry name" value="Tetratricopeptide repeat domain"/>
    <property type="match status" value="1"/>
</dbReference>
<dbReference type="InterPro" id="IPR003109">
    <property type="entry name" value="GoLoco_motif"/>
</dbReference>
<dbReference type="InterPro" id="IPR042168">
    <property type="entry name" value="Pcp2"/>
</dbReference>
<dbReference type="InterPro" id="IPR011990">
    <property type="entry name" value="TPR-like_helical_dom_sf"/>
</dbReference>
<dbReference type="PANTHER" id="PTHR47503">
    <property type="entry name" value="PURKINJE CELL PROTEIN 2"/>
    <property type="match status" value="1"/>
</dbReference>
<dbReference type="PANTHER" id="PTHR47503:SF1">
    <property type="entry name" value="PURKINJE CELL PROTEIN 2 HOMOLOG"/>
    <property type="match status" value="1"/>
</dbReference>
<dbReference type="Pfam" id="PF02188">
    <property type="entry name" value="GoLoco"/>
    <property type="match status" value="2"/>
</dbReference>
<dbReference type="SMART" id="SM00390">
    <property type="entry name" value="GoLoco"/>
    <property type="match status" value="2"/>
</dbReference>
<dbReference type="PROSITE" id="PS50877">
    <property type="entry name" value="GOLOCO"/>
    <property type="match status" value="2"/>
</dbReference>
<accession>P12660</accession>
<accession>P22941</accession>
<accession>Q3TV53</accession>
<sequence>MAGSPDQEGFFNLLTHVQGDRMEEQRCSLQAGPGQNPESQGGPAPEMDNLMDMLVNTQGRRMDDQRVTVNSLPGFQPIGPKDGMQKRPGTLSPQPLLTPQDPAALSFRRNSSPQPQTQAP</sequence>
<protein>
    <recommendedName>
        <fullName>Purkinje cell protein 2</fullName>
    </recommendedName>
    <alternativeName>
        <fullName>Protein PCD-5</fullName>
    </alternativeName>
    <alternativeName>
        <fullName>Purkinje cell-specific protein L7</fullName>
    </alternativeName>
</protein>
<reference key="1">
    <citation type="journal article" date="1988" name="J. Neurosci.">
        <title>cDNA cloning and characterization of three genes uniquely expressed in cerebellum by Purkinje neurons.</title>
        <authorList>
            <person name="Nordquist D.T."/>
            <person name="Kozak C.A."/>
            <person name="Orr H.T."/>
        </authorList>
    </citation>
    <scope>NUCLEOTIDE SEQUENCE [MRNA]</scope>
    <source>
        <strain>C57BL/6J</strain>
    </source>
</reference>
<reference key="2">
    <citation type="journal article" date="1988" name="Neuron">
        <title>A Purkinje cell differentiation marker shows a partial DNA sequence homology to the cellular sis/PDGF2 gene.</title>
        <authorList>
            <person name="Oberdick J."/>
            <person name="Levinthal F."/>
            <person name="Levinthal C."/>
        </authorList>
    </citation>
    <scope>NUCLEOTIDE SEQUENCE [MRNA]</scope>
    <source>
        <strain>C57BL/6J</strain>
        <tissue>Purkinje cell</tissue>
    </source>
</reference>
<reference key="3">
    <citation type="journal article" date="1991" name="Genes Dev.">
        <title>Purkinje cell protein-2 regulatory regions and transgene expression in cerebellar compartments.</title>
        <authorList>
            <person name="Vandaele S."/>
            <person name="Nordquist D.T."/>
            <person name="Feddersen R.M."/>
            <person name="Tretjakoff I."/>
            <person name="Peterson A.C."/>
            <person name="Orr H.T."/>
        </authorList>
    </citation>
    <scope>NUCLEOTIDE SEQUENCE [GENOMIC DNA]</scope>
    <source>
        <strain>BALB/cJ</strain>
        <tissue>Liver</tissue>
    </source>
</reference>
<reference key="4">
    <citation type="journal article" date="2005" name="Science">
        <title>The transcriptional landscape of the mammalian genome.</title>
        <authorList>
            <person name="Carninci P."/>
            <person name="Kasukawa T."/>
            <person name="Katayama S."/>
            <person name="Gough J."/>
            <person name="Frith M.C."/>
            <person name="Maeda N."/>
            <person name="Oyama R."/>
            <person name="Ravasi T."/>
            <person name="Lenhard B."/>
            <person name="Wells C."/>
            <person name="Kodzius R."/>
            <person name="Shimokawa K."/>
            <person name="Bajic V.B."/>
            <person name="Brenner S.E."/>
            <person name="Batalov S."/>
            <person name="Forrest A.R."/>
            <person name="Zavolan M."/>
            <person name="Davis M.J."/>
            <person name="Wilming L.G."/>
            <person name="Aidinis V."/>
            <person name="Allen J.E."/>
            <person name="Ambesi-Impiombato A."/>
            <person name="Apweiler R."/>
            <person name="Aturaliya R.N."/>
            <person name="Bailey T.L."/>
            <person name="Bansal M."/>
            <person name="Baxter L."/>
            <person name="Beisel K.W."/>
            <person name="Bersano T."/>
            <person name="Bono H."/>
            <person name="Chalk A.M."/>
            <person name="Chiu K.P."/>
            <person name="Choudhary V."/>
            <person name="Christoffels A."/>
            <person name="Clutterbuck D.R."/>
            <person name="Crowe M.L."/>
            <person name="Dalla E."/>
            <person name="Dalrymple B.P."/>
            <person name="de Bono B."/>
            <person name="Della Gatta G."/>
            <person name="di Bernardo D."/>
            <person name="Down T."/>
            <person name="Engstrom P."/>
            <person name="Fagiolini M."/>
            <person name="Faulkner G."/>
            <person name="Fletcher C.F."/>
            <person name="Fukushima T."/>
            <person name="Furuno M."/>
            <person name="Futaki S."/>
            <person name="Gariboldi M."/>
            <person name="Georgii-Hemming P."/>
            <person name="Gingeras T.R."/>
            <person name="Gojobori T."/>
            <person name="Green R.E."/>
            <person name="Gustincich S."/>
            <person name="Harbers M."/>
            <person name="Hayashi Y."/>
            <person name="Hensch T.K."/>
            <person name="Hirokawa N."/>
            <person name="Hill D."/>
            <person name="Huminiecki L."/>
            <person name="Iacono M."/>
            <person name="Ikeo K."/>
            <person name="Iwama A."/>
            <person name="Ishikawa T."/>
            <person name="Jakt M."/>
            <person name="Kanapin A."/>
            <person name="Katoh M."/>
            <person name="Kawasawa Y."/>
            <person name="Kelso J."/>
            <person name="Kitamura H."/>
            <person name="Kitano H."/>
            <person name="Kollias G."/>
            <person name="Krishnan S.P."/>
            <person name="Kruger A."/>
            <person name="Kummerfeld S.K."/>
            <person name="Kurochkin I.V."/>
            <person name="Lareau L.F."/>
            <person name="Lazarevic D."/>
            <person name="Lipovich L."/>
            <person name="Liu J."/>
            <person name="Liuni S."/>
            <person name="McWilliam S."/>
            <person name="Madan Babu M."/>
            <person name="Madera M."/>
            <person name="Marchionni L."/>
            <person name="Matsuda H."/>
            <person name="Matsuzawa S."/>
            <person name="Miki H."/>
            <person name="Mignone F."/>
            <person name="Miyake S."/>
            <person name="Morris K."/>
            <person name="Mottagui-Tabar S."/>
            <person name="Mulder N."/>
            <person name="Nakano N."/>
            <person name="Nakauchi H."/>
            <person name="Ng P."/>
            <person name="Nilsson R."/>
            <person name="Nishiguchi S."/>
            <person name="Nishikawa S."/>
            <person name="Nori F."/>
            <person name="Ohara O."/>
            <person name="Okazaki Y."/>
            <person name="Orlando V."/>
            <person name="Pang K.C."/>
            <person name="Pavan W.J."/>
            <person name="Pavesi G."/>
            <person name="Pesole G."/>
            <person name="Petrovsky N."/>
            <person name="Piazza S."/>
            <person name="Reed J."/>
            <person name="Reid J.F."/>
            <person name="Ring B.Z."/>
            <person name="Ringwald M."/>
            <person name="Rost B."/>
            <person name="Ruan Y."/>
            <person name="Salzberg S.L."/>
            <person name="Sandelin A."/>
            <person name="Schneider C."/>
            <person name="Schoenbach C."/>
            <person name="Sekiguchi K."/>
            <person name="Semple C.A."/>
            <person name="Seno S."/>
            <person name="Sessa L."/>
            <person name="Sheng Y."/>
            <person name="Shibata Y."/>
            <person name="Shimada H."/>
            <person name="Shimada K."/>
            <person name="Silva D."/>
            <person name="Sinclair B."/>
            <person name="Sperling S."/>
            <person name="Stupka E."/>
            <person name="Sugiura K."/>
            <person name="Sultana R."/>
            <person name="Takenaka Y."/>
            <person name="Taki K."/>
            <person name="Tammoja K."/>
            <person name="Tan S.L."/>
            <person name="Tang S."/>
            <person name="Taylor M.S."/>
            <person name="Tegner J."/>
            <person name="Teichmann S.A."/>
            <person name="Ueda H.R."/>
            <person name="van Nimwegen E."/>
            <person name="Verardo R."/>
            <person name="Wei C.L."/>
            <person name="Yagi K."/>
            <person name="Yamanishi H."/>
            <person name="Zabarovsky E."/>
            <person name="Zhu S."/>
            <person name="Zimmer A."/>
            <person name="Hide W."/>
            <person name="Bult C."/>
            <person name="Grimmond S.M."/>
            <person name="Teasdale R.D."/>
            <person name="Liu E.T."/>
            <person name="Brusic V."/>
            <person name="Quackenbush J."/>
            <person name="Wahlestedt C."/>
            <person name="Mattick J.S."/>
            <person name="Hume D.A."/>
            <person name="Kai C."/>
            <person name="Sasaki D."/>
            <person name="Tomaru Y."/>
            <person name="Fukuda S."/>
            <person name="Kanamori-Katayama M."/>
            <person name="Suzuki M."/>
            <person name="Aoki J."/>
            <person name="Arakawa T."/>
            <person name="Iida J."/>
            <person name="Imamura K."/>
            <person name="Itoh M."/>
            <person name="Kato T."/>
            <person name="Kawaji H."/>
            <person name="Kawagashira N."/>
            <person name="Kawashima T."/>
            <person name="Kojima M."/>
            <person name="Kondo S."/>
            <person name="Konno H."/>
            <person name="Nakano K."/>
            <person name="Ninomiya N."/>
            <person name="Nishio T."/>
            <person name="Okada M."/>
            <person name="Plessy C."/>
            <person name="Shibata K."/>
            <person name="Shiraki T."/>
            <person name="Suzuki S."/>
            <person name="Tagami M."/>
            <person name="Waki K."/>
            <person name="Watahiki A."/>
            <person name="Okamura-Oho Y."/>
            <person name="Suzuki H."/>
            <person name="Kawai J."/>
            <person name="Hayashizaki Y."/>
        </authorList>
    </citation>
    <scope>NUCLEOTIDE SEQUENCE [LARGE SCALE MRNA]</scope>
    <source>
        <strain>C57BL/6J</strain>
        <tissue>Brain</tissue>
        <tissue>Cerebellum</tissue>
    </source>
</reference>
<reference key="5">
    <citation type="journal article" date="2010" name="Cell">
        <title>A tissue-specific atlas of mouse protein phosphorylation and expression.</title>
        <authorList>
            <person name="Huttlin E.L."/>
            <person name="Jedrychowski M.P."/>
            <person name="Elias J.E."/>
            <person name="Goswami T."/>
            <person name="Rad R."/>
            <person name="Beausoleil S.A."/>
            <person name="Villen J."/>
            <person name="Haas W."/>
            <person name="Sowa M.E."/>
            <person name="Gygi S.P."/>
        </authorList>
    </citation>
    <scope>PHOSPHORYLATION [LARGE SCALE ANALYSIS] AT SER-111</scope>
    <scope>IDENTIFICATION BY MASS SPECTROMETRY [LARGE SCALE ANALYSIS]</scope>
    <source>
        <tissue>Brain</tissue>
    </source>
</reference>
<evidence type="ECO:0000255" key="1">
    <source>
        <dbReference type="PROSITE-ProRule" id="PRU00097"/>
    </source>
</evidence>
<evidence type="ECO:0000256" key="2">
    <source>
        <dbReference type="SAM" id="MobiDB-lite"/>
    </source>
</evidence>
<evidence type="ECO:0000305" key="3"/>
<evidence type="ECO:0007744" key="4">
    <source>
    </source>
</evidence>
<organism>
    <name type="scientific">Mus musculus</name>
    <name type="common">Mouse</name>
    <dbReference type="NCBI Taxonomy" id="10090"/>
    <lineage>
        <taxon>Eukaryota</taxon>
        <taxon>Metazoa</taxon>
        <taxon>Chordata</taxon>
        <taxon>Craniata</taxon>
        <taxon>Vertebrata</taxon>
        <taxon>Euteleostomi</taxon>
        <taxon>Mammalia</taxon>
        <taxon>Eutheria</taxon>
        <taxon>Euarchontoglires</taxon>
        <taxon>Glires</taxon>
        <taxon>Rodentia</taxon>
        <taxon>Myomorpha</taxon>
        <taxon>Muroidea</taxon>
        <taxon>Muridae</taxon>
        <taxon>Murinae</taxon>
        <taxon>Mus</taxon>
        <taxon>Mus</taxon>
    </lineage>
</organism>
<proteinExistence type="evidence at protein level"/>
<feature type="chain" id="PRO_0000058261" description="Purkinje cell protein 2">
    <location>
        <begin position="1"/>
        <end position="120"/>
    </location>
</feature>
<feature type="domain" description="GoLoco 1" evidence="1">
    <location>
        <begin position="7"/>
        <end position="29"/>
    </location>
</feature>
<feature type="domain" description="GoLoco 2" evidence="1">
    <location>
        <begin position="47"/>
        <end position="69"/>
    </location>
</feature>
<feature type="region of interest" description="Disordered" evidence="2">
    <location>
        <begin position="16"/>
        <end position="120"/>
    </location>
</feature>
<feature type="compositionally biased region" description="Polar residues" evidence="2">
    <location>
        <begin position="108"/>
        <end position="120"/>
    </location>
</feature>
<feature type="modified residue" description="Phosphoserine" evidence="4">
    <location>
        <position position="111"/>
    </location>
</feature>
<comment type="function">
    <text>May function as a cell-type specific modulator for G protein-mediated cell signaling.</text>
</comment>
<comment type="tissue specificity">
    <text>Cerebellum (Purkinje cells) and retinal bipolar neurons.</text>
</comment>
<comment type="sequence caution" evidence="3">
    <conflict type="erroneous initiation">
        <sequence resource="EMBL-CDS" id="AAA02989"/>
    </conflict>
</comment>
<comment type="sequence caution" evidence="3">
    <conflict type="erroneous gene model prediction">
        <sequence resource="EMBL-CDS" id="AAB19316"/>
    </conflict>
</comment>
<comment type="sequence caution" evidence="3">
    <conflict type="erroneous initiation">
        <sequence resource="EMBL-CDS" id="BAC25015"/>
    </conflict>
</comment>
<comment type="sequence caution" evidence="3">
    <conflict type="erroneous initiation">
        <sequence resource="EMBL-CDS" id="BAE35767"/>
    </conflict>
</comment>
<comment type="sequence caution" evidence="3">
    <conflict type="frameshift" ref="2"/>
</comment>
<name>PCP2_MOUSE</name>
<keyword id="KW-0597">Phosphoprotein</keyword>
<keyword id="KW-1185">Reference proteome</keyword>
<keyword id="KW-0677">Repeat</keyword>
<gene>
    <name type="primary">Pcp2</name>
    <name type="synonym">Pcp-2</name>
</gene>